<proteinExistence type="evidence at protein level"/>
<keyword id="KW-0963">Cytoplasm</keyword>
<keyword id="KW-0217">Developmental protein</keyword>
<keyword id="KW-0903">Direct protein sequencing</keyword>
<keyword id="KW-0539">Nucleus</keyword>
<keyword id="KW-0607">Phytochrome signaling pathway</keyword>
<keyword id="KW-0736">Signalosome</keyword>
<evidence type="ECO:0000250" key="1"/>
<evidence type="ECO:0000255" key="2">
    <source>
        <dbReference type="PROSITE-ProRule" id="PRU01185"/>
    </source>
</evidence>
<evidence type="ECO:0000305" key="3"/>
<reference key="1">
    <citation type="journal article" date="1999" name="Plant Cell">
        <title>Arabidopsis cop8 and fus4 mutations define the same gene that encodes subunit 4 of the COP9 signalosome.</title>
        <authorList>
            <person name="Serino G."/>
            <person name="Tsuge T."/>
            <person name="Kwok S."/>
            <person name="Matsui M."/>
            <person name="Wei N."/>
            <person name="Deng X.-W."/>
        </authorList>
    </citation>
    <scope>PROTEIN SEQUENCE</scope>
    <scope>COMPONENT OF THE CSN COMPLEX WITH CSN1; CSN2; CSN4; CSN5; CSN6; CSN7 AND CSN8</scope>
</reference>
<name>CSN3_BRAOL</name>
<accession>P68358</accession>
<dbReference type="SMR" id="P68358"/>
<dbReference type="IntAct" id="P68358">
    <property type="interactions" value="1"/>
</dbReference>
<dbReference type="GO" id="GO:0008180">
    <property type="term" value="C:COP9 signalosome"/>
    <property type="evidence" value="ECO:0007669"/>
    <property type="project" value="UniProtKB-KW"/>
</dbReference>
<dbReference type="GO" id="GO:0005737">
    <property type="term" value="C:cytoplasm"/>
    <property type="evidence" value="ECO:0007669"/>
    <property type="project" value="UniProtKB-SubCell"/>
</dbReference>
<dbReference type="GO" id="GO:0009585">
    <property type="term" value="P:red, far-red light phototransduction"/>
    <property type="evidence" value="ECO:0007669"/>
    <property type="project" value="UniProtKB-KW"/>
</dbReference>
<dbReference type="GO" id="GO:0006511">
    <property type="term" value="P:ubiquitin-dependent protein catabolic process"/>
    <property type="evidence" value="ECO:0007669"/>
    <property type="project" value="TreeGrafter"/>
</dbReference>
<dbReference type="Gene3D" id="1.10.10.10">
    <property type="entry name" value="Winged helix-like DNA-binding domain superfamily/Winged helix DNA-binding domain"/>
    <property type="match status" value="1"/>
</dbReference>
<dbReference type="InterPro" id="IPR050756">
    <property type="entry name" value="CSN3"/>
</dbReference>
<dbReference type="InterPro" id="IPR000717">
    <property type="entry name" value="PCI_dom"/>
</dbReference>
<dbReference type="InterPro" id="IPR036388">
    <property type="entry name" value="WH-like_DNA-bd_sf"/>
</dbReference>
<dbReference type="InterPro" id="IPR036390">
    <property type="entry name" value="WH_DNA-bd_sf"/>
</dbReference>
<dbReference type="PANTHER" id="PTHR10758">
    <property type="entry name" value="26S PROTEASOME NON-ATPASE REGULATORY SUBUNIT 3/COP9 SIGNALOSOME COMPLEX SUBUNIT 3"/>
    <property type="match status" value="1"/>
</dbReference>
<dbReference type="PANTHER" id="PTHR10758:SF1">
    <property type="entry name" value="COP9 SIGNALOSOME COMPLEX SUBUNIT 3"/>
    <property type="match status" value="1"/>
</dbReference>
<dbReference type="Pfam" id="PF01399">
    <property type="entry name" value="PCI"/>
    <property type="match status" value="1"/>
</dbReference>
<dbReference type="SUPFAM" id="SSF46785">
    <property type="entry name" value="Winged helix' DNA-binding domain"/>
    <property type="match status" value="1"/>
</dbReference>
<dbReference type="PROSITE" id="PS50250">
    <property type="entry name" value="PCI"/>
    <property type="match status" value="1"/>
</dbReference>
<protein>
    <recommendedName>
        <fullName>COP9 signalosome complex subunit 3</fullName>
        <shortName>Signalosome subunit 3</shortName>
    </recommendedName>
    <alternativeName>
        <fullName>FUSCA protein 11</fullName>
        <shortName>FUSCA11</shortName>
    </alternativeName>
</protein>
<gene>
    <name type="primary">CSN3</name>
    <name type="synonym">FUS11</name>
</gene>
<feature type="chain" id="PRO_0000120985" description="COP9 signalosome complex subunit 3">
    <location>
        <begin position="1" status="less than"/>
        <end position="55" status="greater than"/>
    </location>
</feature>
<feature type="domain" description="PCI" evidence="2">
    <location>
        <begin position="1" status="less than"/>
        <end position="52"/>
    </location>
</feature>
<feature type="non-consecutive residues" evidence="3">
    <location>
        <begin position="18"/>
        <end position="19"/>
    </location>
</feature>
<feature type="non-terminal residue">
    <location>
        <position position="1"/>
    </location>
</feature>
<feature type="non-terminal residue">
    <location>
        <position position="55"/>
    </location>
</feature>
<comment type="function">
    <text evidence="1">Component of the COP9 signalosome complex (CSN), a complex involved in various cellular and developmental processes such as photomorphogenesis and auxin and jasmonate responses. The CSN complex is an essential regulator of the ubiquitin (Ubl) conjugation pathway by mediating the deneddylation of the cullin subunits of SCF-type E3 ligase complexes, leading to decrease the Ubl ligase activity of SCF. It is involved in repression of photomorphogenesis in darkness by regulating the activity of COP1-containing Ubl ligase complexes (By similarity).</text>
</comment>
<comment type="subunit">
    <text>Component of the CSN complex, probably composed of CSN1, CSN2, CSN3, CSN4, CSN5 (CSN5A or CSN5B), CSN6 (CSN6A or CSN6B), CSN7 and CSN8.</text>
</comment>
<comment type="subcellular location">
    <subcellularLocation>
        <location>Cytoplasm</location>
    </subcellularLocation>
    <subcellularLocation>
        <location>Nucleus</location>
    </subcellularLocation>
</comment>
<comment type="similarity">
    <text evidence="3">Belongs to the CSN3 family.</text>
</comment>
<organism>
    <name type="scientific">Brassica oleracea</name>
    <name type="common">Wild cabbage</name>
    <dbReference type="NCBI Taxonomy" id="3712"/>
    <lineage>
        <taxon>Eukaryota</taxon>
        <taxon>Viridiplantae</taxon>
        <taxon>Streptophyta</taxon>
        <taxon>Embryophyta</taxon>
        <taxon>Tracheophyta</taxon>
        <taxon>Spermatophyta</taxon>
        <taxon>Magnoliopsida</taxon>
        <taxon>eudicotyledons</taxon>
        <taxon>Gunneridae</taxon>
        <taxon>Pentapetalae</taxon>
        <taxon>rosids</taxon>
        <taxon>malvids</taxon>
        <taxon>Brassicales</taxon>
        <taxon>Brassicaceae</taxon>
        <taxon>Brassiceae</taxon>
        <taxon>Brassica</taxon>
    </lineage>
</organism>
<sequence length="55" mass="6104">KSIQGLSASPGDLSALHGKEAEMHVLQMIQDGQIHALINQKDGMVRFLEDPEQYK</sequence>